<proteinExistence type="evidence at protein level"/>
<organism>
    <name type="scientific">Mus musculus</name>
    <name type="common">Mouse</name>
    <dbReference type="NCBI Taxonomy" id="10090"/>
    <lineage>
        <taxon>Eukaryota</taxon>
        <taxon>Metazoa</taxon>
        <taxon>Chordata</taxon>
        <taxon>Craniata</taxon>
        <taxon>Vertebrata</taxon>
        <taxon>Euteleostomi</taxon>
        <taxon>Mammalia</taxon>
        <taxon>Eutheria</taxon>
        <taxon>Euarchontoglires</taxon>
        <taxon>Glires</taxon>
        <taxon>Rodentia</taxon>
        <taxon>Myomorpha</taxon>
        <taxon>Muroidea</taxon>
        <taxon>Muridae</taxon>
        <taxon>Murinae</taxon>
        <taxon>Mus</taxon>
        <taxon>Mus</taxon>
    </lineage>
</organism>
<keyword id="KW-0010">Activator</keyword>
<keyword id="KW-0090">Biological rhythms</keyword>
<keyword id="KW-0227">DNA damage</keyword>
<keyword id="KW-0238">DNA-binding</keyword>
<keyword id="KW-0349">Heme</keyword>
<keyword id="KW-0408">Iron</keyword>
<keyword id="KW-0479">Metal-binding</keyword>
<keyword id="KW-0539">Nucleus</keyword>
<keyword id="KW-0597">Phosphoprotein</keyword>
<keyword id="KW-1185">Reference proteome</keyword>
<keyword id="KW-0677">Repeat</keyword>
<keyword id="KW-0804">Transcription</keyword>
<keyword id="KW-0805">Transcription regulation</keyword>
<comment type="function">
    <text evidence="5 8 9 10 11 12 13 14 17 18 19 20">Transcriptional activator which forms a core component of the circadian clock. The circadian clock, an internal time-keeping system, regulates various physiological processes through the generation of approximately 24 hour circadian rhythms in gene expression, which are translated into rhythms in metabolism and behavior. It is derived from the Latin roots 'circa' (about) and 'diem' (day) and acts as an important regulator of a wide array of physiological functions including metabolism, sleep, body temperature, blood pressure, endocrine, immune, cardiovascular, and renal function. Consists of two major components: the central clock, residing in the suprachiasmatic nucleus (SCN) of the brain, and the peripheral clocks that are present in nearly every tissue and organ system. Both the central and peripheral clocks can be reset by environmental cues, also known as Zeitgebers (German for 'timegivers'). The predominant Zeitgeber for the central clock is light, which is sensed by retina and signals directly to the SCN. The central clock entrains the peripheral clocks through neuronal and hormonal signals, body temperature and feeding-related cues, aligning all clocks with the external light/dark cycle. Circadian rhythms allow an organism to achieve temporal homeostasis with its environment at the molecular level by regulating gene expression to create a peak of protein expression once every 24 hours to control when a particular physiological process is most active with respect to the solar day. Transcription and translation of core clock components (CLOCK, NPAS2, BMAL1, BMAL2, PER1, PER2, PER3, CRY1 and CRY2) plays a critical role in rhythm generation, whereas delays imposed by post-translational modifications (PTMs) are important for determining the period (tau) of the rhythms (tau refers to the period of a rhythm and is the length, in time, of one complete cycle). A diurnal rhythm is synchronized with the day/night cycle, while the ultradian and infradian rhythms have a period shorter and longer than 24 hours, respectively. Disruptions in the circadian rhythms contribute to the pathology of cardiovascular diseases, cancer, metabolic syndromes and aging. A transcription/translation feedback loop (TTFL) forms the core of the molecular circadian clock mechanism. Transcription factors, CLOCK or NPAS2 and BMAL1 or BMAL2, form the positive limb of the feedback loop, act in the form of a heterodimer and activate the transcription of core clock genes and clock-controlled genes (involved in key metabolic processes), harboring E-box elements (5'-CACGTG-3') within their promoters. The core clock genes: PER1/2/3 and CRY1/2 which are transcriptional repressors form the negative limb of the feedback loop and interact with the CLOCK|NPAS2-BMAL1|BMAL2 heterodimer inhibiting its activity and thereby negatively regulating their own expression. This heterodimer also activates nuclear receptors NR1D1/2 and RORA/B/G, which form a second feedback loop and which activate and repress BMAL1 transcription, respectively. The NPAS2-BMAL1 heterodimer positively regulates the expression of MAOA, F7 and LDHA and modulates the circadian rhythm of daytime contrast sensitivity by regulating the rhythmic expression of adenylate cyclase type 1 (ADCY1) in the retina. NPAS2 plays an important role in sleep homeostasis and in maintaining circadian behaviors in normal light/dark and feeding conditions and in the effective synchronization of feeding behavior with scheduled food availability. Regulates the gene transcription of key metabolic pathways in the liver and is involved in DNA damage response by regulating several cell cycle and DNA repair genes. Controls the circadian rhythm of NR0B2 expression by binding rhythmically to its promoter (PubMed:25212631). Mediates the diurnal variation in the expression of GABARA1 receptor in the brain and contributes to the regulation of anxiety-like behaviors and GABAergic neurotransmission in the ventral striatum (PubMed:29163035).</text>
</comment>
<comment type="cofactor">
    <cofactor evidence="7 15">
        <name>heme</name>
        <dbReference type="ChEBI" id="CHEBI:30413"/>
    </cofactor>
</comment>
<comment type="activity regulation">
    <text evidence="7 16">Carbon monoxide (CO) and the redox state of the cell can modulate the transcriptional activity of the NPAS2-BMAL1 heterodimer. NADH and NADPH enhance the DNA-binding activity of the heterodimer whereas CO binds the heme group in NPAS2 and inhibits the DNA-binding activity of the heterodimer.</text>
</comment>
<comment type="subunit">
    <text evidence="1 6 8">Component of the circadian clock oscillator which includes the CRY proteins, CLOCK or NPAS2, BMAL1 or BMAL2, CSNK1D and/or CSNK1E, TIMELESS and the PER proteins. Efficient DNA binding requires dimerization with another bHLH protein. Interacts with NCOA3, KAT2B and CREBBP (By similarity). Forms a heterodimer with BMAL1 and this heterodimerization is required for E-box-dependent transactivation. Interacts with EP300.</text>
</comment>
<comment type="subcellular location">
    <subcellularLocation>
        <location evidence="3 8">Nucleus</location>
    </subcellularLocation>
</comment>
<comment type="tissue specificity">
    <text evidence="10 17 20 21">Expressed in the retinal ganglion cells (at protein level). Expressed in the hypothalamic suprachiasmatic nuclei (SCN) of the brain. Also found in spinal cord, and to a lesser extent in colon, small intestine and uterus. Exhibits a diurnal variation in its expression in the brain (PubMed:29163035).</text>
</comment>
<comment type="developmental stage">
    <text evidence="21">First detected 3 days after birth.</text>
</comment>
<comment type="induction">
    <text evidence="6 17">Expression in the retinal ganglion cells and heart oscillates in a circadian manner.</text>
</comment>
<comment type="disruption phenotype">
    <text evidence="9 10 14 17 18 20">Mice exhibit altered sleep and locomotor activity. Show alterations in sleep homeostasis, altering the electrophysiological properties of neurons after sleep deprivation. Display normal patterns of sleep throughout the light period, however during the active, nocturnal period, they remain awake nearly continuously for the first 8 to 9 hours of darkness and tend to fast rather than readapt to eating in daylight. Exhibit a dysregulation in the lipid and fatty acid metabolism pathways and a significant reduction in daytime contrast sensitivity. Null mutant mice and the mice with a conditional knockdown in the ventral striatum show a reduced anxiety-like behavior and a reduced sensitivity to diazepam (PubMed:29163035).</text>
</comment>
<accession>P97460</accession>
<protein>
    <recommendedName>
        <fullName>Neuronal PAS domain-containing protein 2</fullName>
        <shortName>Neuronal PAS2</shortName>
    </recommendedName>
</protein>
<reference key="1">
    <citation type="journal article" date="1997" name="Proc. Natl. Acad. Sci. U.S.A.">
        <title>Molecular characterization of two mammalian bHLH-PAS domain proteins selectively expressed in the central nervous system.</title>
        <authorList>
            <person name="Zhou Y.-D."/>
            <person name="Barnard M."/>
            <person name="Tian H."/>
            <person name="Li X."/>
            <person name="Ring H.Z."/>
            <person name="Francke U."/>
            <person name="Shelton J."/>
            <person name="Richardson J."/>
            <person name="Russell D.W."/>
            <person name="McKnight S.L."/>
        </authorList>
    </citation>
    <scope>NUCLEOTIDE SEQUENCE [MRNA]</scope>
    <scope>DEVELOPMENTAL STAGE</scope>
    <scope>TISSUE SPECIFICITY</scope>
    <source>
        <tissue>Brain</tissue>
    </source>
</reference>
<reference key="2">
    <citation type="journal article" date="2003" name="Science">
        <title>Altered patterns of sleep and behavioral adaptability in NPAS2-deficient mice.</title>
        <authorList>
            <person name="Dudley C.A."/>
            <person name="Erbel-Sieler C."/>
            <person name="Estill S.J."/>
            <person name="Reick M."/>
            <person name="Franken P."/>
            <person name="Pitts S."/>
            <person name="McKnight S.L."/>
        </authorList>
    </citation>
    <scope>FUNCTION</scope>
</reference>
<reference key="3">
    <citation type="journal article" date="2004" name="J. Biol. Chem.">
        <title>Histone acetyltransferase-dependent chromatin remodeling and the vascular clock.</title>
        <authorList>
            <person name="Curtis A.M."/>
            <person name="Seo S.B."/>
            <person name="Westgate E.J."/>
            <person name="Rudic R.D."/>
            <person name="Smyth E.M."/>
            <person name="Chakravarti D."/>
            <person name="FitzGerald G.A."/>
            <person name="McNamara P."/>
        </authorList>
    </citation>
    <scope>INTERACTION WITH EP300</scope>
    <scope>INDUCTION</scope>
</reference>
<reference key="4">
    <citation type="journal article" date="2005" name="J. Biol. Chem.">
        <title>CO-dependent activity-controlling mechanism of heme-containing CO-sensor protein, neuronal PAS domain protein 2.</title>
        <authorList>
            <person name="Uchida T."/>
            <person name="Sato E."/>
            <person name="Sato A."/>
            <person name="Sagami I."/>
            <person name="Shimizu T."/>
            <person name="Kitagawa T."/>
        </authorList>
    </citation>
    <scope>HEME-BINDING</scope>
    <scope>RESONANCE RAMAN SPECTROSCOPY</scope>
    <scope>ACTIVITY REGULATION</scope>
</reference>
<reference key="5">
    <citation type="journal article" date="2006" name="Cell Cycle">
        <title>Post-translational regulation of circadian transcriptional CLOCK(NPAS2)/BMAL1 complex by CRYPTOCHROMES.</title>
        <authorList>
            <person name="Kondratov R.V."/>
            <person name="Kondratova A.A."/>
            <person name="Lee C."/>
            <person name="Gorbacheva V.Y."/>
            <person name="Chernov M.V."/>
            <person name="Antoch M.P."/>
        </authorList>
    </citation>
    <scope>INTERACTION WITH BMAL1</scope>
    <scope>FUNCTION</scope>
    <scope>PHOSPHORYLATION</scope>
    <scope>SUBCELLULAR LOCATION</scope>
</reference>
<reference key="6">
    <citation type="journal article" date="2006" name="Proc. Natl. Acad. Sci. U.S.A.">
        <title>NPAS2 as a transcriptional regulator of non-rapid eye movement sleep: genotype and sex interactions.</title>
        <authorList>
            <person name="Franken P."/>
            <person name="Dudley C.A."/>
            <person name="Estill S.J."/>
            <person name="Barakat M."/>
            <person name="Thomason R."/>
            <person name="O'Hara B.F."/>
            <person name="McKnight S.L."/>
        </authorList>
    </citation>
    <scope>FUNCTION</scope>
    <scope>DISRUPTION PHENOTYPE</scope>
</reference>
<reference key="7">
    <citation type="journal article" date="2007" name="Nat. Neurosci.">
        <title>CLOCK and NPAS2 have overlapping roles in the suprachiasmatic circadian clock.</title>
        <authorList>
            <person name="DeBruyne J.P."/>
            <person name="Weaver D.R."/>
            <person name="Reppert S.M."/>
        </authorList>
    </citation>
    <scope>FUNCTION</scope>
    <scope>DISRUPTION PHENOTYPE</scope>
    <scope>TISSUE SPECIFICITY</scope>
</reference>
<reference key="8">
    <citation type="journal article" date="2008" name="Biochem. Biophys. Res. Commun.">
        <title>Effects of mutations in the heme domain on the transcriptional activity and DNA-binding activity of NPAS2.</title>
        <authorList>
            <person name="Ishida M."/>
            <person name="Ueha T."/>
            <person name="Sagami I."/>
        </authorList>
    </citation>
    <scope>FUNCTION</scope>
    <scope>DNA-BINDING</scope>
    <scope>MUTAGENESIS OF HIS-119 AND HIS-171</scope>
</reference>
<reference key="9">
    <citation type="journal article" date="2008" name="Curr. Biol.">
        <title>Regulation of monoamine oxidase A by circadian-clock components implies clock influence on mood.</title>
        <authorList>
            <person name="Hampp G."/>
            <person name="Ripperger J.A."/>
            <person name="Houben T."/>
            <person name="Schmutz I."/>
            <person name="Blex C."/>
            <person name="Perreau-Lenz S."/>
            <person name="Brunk I."/>
            <person name="Spanagel R."/>
            <person name="Ahnert-Hilger G."/>
            <person name="Meijer J.H."/>
            <person name="Albrecht U."/>
        </authorList>
    </citation>
    <scope>FUNCTION</scope>
</reference>
<reference key="10">
    <citation type="journal article" date="2008" name="J. Genet.">
        <title>Oscillating perceptions: the ups and downs of the CLOCK protein in the mouse circadian system.</title>
        <authorList>
            <person name="Debruyne J.P."/>
        </authorList>
    </citation>
    <scope>REVIEW</scope>
</reference>
<reference key="11">
    <citation type="journal article" date="2008" name="Mol. Cell. Biol.">
        <title>Evidence for an overlapping role of CLOCK and NPAS2 transcription factors in liver circadian oscillators.</title>
        <authorList>
            <person name="Bertolucci C."/>
            <person name="Cavallari N."/>
            <person name="Colognesi I."/>
            <person name="Aguzzi J."/>
            <person name="Chen Z."/>
            <person name="Caruso P."/>
            <person name="Foa A."/>
            <person name="Tosini G."/>
            <person name="Bernardi F."/>
            <person name="Pinotti M."/>
        </authorList>
    </citation>
    <scope>FUNCTION</scope>
</reference>
<reference key="12">
    <citation type="journal article" date="2010" name="Physiol. Behav.">
        <title>NPAS2 deletion impairs responses to restricted feeding but not to metabolic challenges.</title>
        <authorList>
            <person name="Wu X."/>
            <person name="Wiater M.F."/>
            <person name="Ritter S."/>
        </authorList>
    </citation>
    <scope>FUNCTION</scope>
    <scope>DISRUPTION PHENOTYPE</scope>
</reference>
<reference key="13">
    <citation type="journal article" date="2012" name="J. Inorg. Biochem.">
        <title>Effects of the bHLH domain on axial coordination of heme in the PAS-A domain of neuronal PAS domain protein 2 (NPAS2): conversion from His119/Cys170 coordination to His119/His171 coordination.</title>
        <authorList>
            <person name="Uchida T."/>
            <person name="Sagami I."/>
            <person name="Shimizu T."/>
            <person name="Ishimori K."/>
            <person name="Kitagawa T."/>
        </authorList>
    </citation>
    <scope>HEME-BINDING</scope>
    <scope>RESONANCE RAMAN SPECTROSCOPY</scope>
</reference>
<reference key="14">
    <citation type="journal article" date="2013" name="Biochem. Biophys. Res. Commun.">
        <title>Effects of NAD(P)H and its derivatives on the DNA-binding activity of NPAS2, a mammalian circadian transcription factor.</title>
        <authorList>
            <person name="Yoshii K."/>
            <person name="Ishijima S."/>
            <person name="Sagami I."/>
        </authorList>
    </citation>
    <scope>DNA-BINDING</scope>
    <scope>ACTIVITY REGULATION</scope>
</reference>
<reference key="15">
    <citation type="journal article" date="2013" name="J. Neurosci.">
        <title>Circadian rhythm of contrast sensitivity is regulated by a dopamine-neuronal PAS-domain protein 2-adenylyl cyclase 1 signaling pathway in retinal ganglion cells.</title>
        <authorList>
            <person name="Hwang C.K."/>
            <person name="Chaurasia S.S."/>
            <person name="Jackson C.R."/>
            <person name="Chan G.C."/>
            <person name="Storm D.R."/>
            <person name="Iuvone P.M."/>
        </authorList>
    </citation>
    <scope>FUNCTION</scope>
    <scope>DISRUPTION PHENOTYPE</scope>
    <scope>TISSUE SPECIFICITY</scope>
    <scope>INDUCTION</scope>
</reference>
<reference key="16">
    <citation type="journal article" date="2013" name="Mol. Genet. Metab.">
        <title>Dysregulation of Npas2 leads to altered metabolic pathways in a murine knockout model.</title>
        <authorList>
            <person name="O'Neil D."/>
            <person name="Mendez-Figueroa H."/>
            <person name="Mistretta T.A."/>
            <person name="Su C."/>
            <person name="Lane R.H."/>
            <person name="Aagaard K.M."/>
        </authorList>
    </citation>
    <scope>FUNCTION</scope>
    <scope>DISRUPTION PHENOTYPE</scope>
</reference>
<reference key="17">
    <citation type="journal article" date="2015" name="Hepatology">
        <title>Small heterodimer partner/neuronal PAS domain protein 2 axis regulates the oscillation of liver lipid metabolism.</title>
        <authorList>
            <person name="Lee S.M."/>
            <person name="Zhang Y."/>
            <person name="Tsuchiya H."/>
            <person name="Smalling R."/>
            <person name="Jetten A.M."/>
            <person name="Wang L."/>
        </authorList>
    </citation>
    <scope>FUNCTION</scope>
</reference>
<reference key="18">
    <citation type="journal article" date="2017" name="Front. Mol. Neurosci.">
        <title>NPAS2 regulation of anxiety-like behavior and GABAA receptors.</title>
        <authorList>
            <person name="Ozburn A.R."/>
            <person name="Kern J."/>
            <person name="Parekh P.K."/>
            <person name="Logan R.W."/>
            <person name="Liu Z."/>
            <person name="Falcon E."/>
            <person name="Becker-Krail D."/>
            <person name="Purohit K."/>
            <person name="Edgar N.M."/>
            <person name="Huang Y."/>
            <person name="McClung C.A."/>
        </authorList>
    </citation>
    <scope>FUNCTION</scope>
    <scope>DISRUPTION PHENOTYPE</scope>
    <scope>INDUCTION</scope>
</reference>
<feature type="chain" id="PRO_0000127407" description="Neuronal PAS domain-containing protein 2">
    <location>
        <begin position="1"/>
        <end position="816"/>
    </location>
</feature>
<feature type="domain" description="bHLH" evidence="3">
    <location>
        <begin position="9"/>
        <end position="59"/>
    </location>
</feature>
<feature type="domain" description="PAS 1" evidence="2">
    <location>
        <begin position="82"/>
        <end position="152"/>
    </location>
</feature>
<feature type="domain" description="PAS 2" evidence="2">
    <location>
        <begin position="237"/>
        <end position="307"/>
    </location>
</feature>
<feature type="domain" description="PAC">
    <location>
        <begin position="311"/>
        <end position="354"/>
    </location>
</feature>
<feature type="region of interest" description="Sufficient for heterodimer formation with BMAL1, E-box binding and for the effect of NADPH" evidence="16">
    <location>
        <begin position="1"/>
        <end position="61"/>
    </location>
</feature>
<feature type="region of interest" description="Disordered" evidence="4">
    <location>
        <begin position="1"/>
        <end position="21"/>
    </location>
</feature>
<feature type="region of interest" description="Disordered" evidence="4">
    <location>
        <begin position="364"/>
        <end position="431"/>
    </location>
</feature>
<feature type="region of interest" description="Disordered" evidence="4">
    <location>
        <begin position="610"/>
        <end position="639"/>
    </location>
</feature>
<feature type="region of interest" description="Disordered" evidence="4">
    <location>
        <begin position="685"/>
        <end position="705"/>
    </location>
</feature>
<feature type="region of interest" description="Disordered" evidence="4">
    <location>
        <begin position="742"/>
        <end position="816"/>
    </location>
</feature>
<feature type="compositionally biased region" description="Basic and acidic residues" evidence="4">
    <location>
        <begin position="1"/>
        <end position="10"/>
    </location>
</feature>
<feature type="compositionally biased region" description="Low complexity" evidence="4">
    <location>
        <begin position="400"/>
        <end position="413"/>
    </location>
</feature>
<feature type="compositionally biased region" description="Polar residues" evidence="4">
    <location>
        <begin position="420"/>
        <end position="431"/>
    </location>
</feature>
<feature type="compositionally biased region" description="Low complexity" evidence="4">
    <location>
        <begin position="623"/>
        <end position="639"/>
    </location>
</feature>
<feature type="compositionally biased region" description="Low complexity" evidence="4">
    <location>
        <begin position="745"/>
        <end position="759"/>
    </location>
</feature>
<feature type="compositionally biased region" description="Polar residues" evidence="4">
    <location>
        <begin position="780"/>
        <end position="789"/>
    </location>
</feature>
<feature type="compositionally biased region" description="Basic residues" evidence="4">
    <location>
        <begin position="806"/>
        <end position="816"/>
    </location>
</feature>
<feature type="binding site" description="axial binding residue" evidence="7 15">
    <location>
        <position position="119"/>
    </location>
    <ligand>
        <name>heme b</name>
        <dbReference type="ChEBI" id="CHEBI:60344"/>
    </ligand>
    <ligandPart>
        <name>Fe</name>
        <dbReference type="ChEBI" id="CHEBI:18248"/>
    </ligandPart>
</feature>
<feature type="binding site" description="axial binding residue" evidence="7 15">
    <location>
        <position position="171"/>
    </location>
    <ligand>
        <name>heme b</name>
        <dbReference type="ChEBI" id="CHEBI:60344"/>
    </ligand>
    <ligandPart>
        <name>Fe</name>
        <dbReference type="ChEBI" id="CHEBI:18248"/>
    </ligandPart>
</feature>
<feature type="mutagenesis site" description="Significant decrease in DNA binding affinity resulting in a loss of the transcriptional activity." evidence="11">
    <original>H</original>
    <variation>A</variation>
    <location>
        <position position="119"/>
    </location>
</feature>
<feature type="mutagenesis site" description="Significant decrease in DNA binding affinity resulting in a loss of the transcriptional activity." evidence="11">
    <original>H</original>
    <variation>A</variation>
    <location>
        <position position="171"/>
    </location>
</feature>
<sequence>MDEDEKDRAKRASRNKSEKKRRDQFNVLIKELSSMLPGNTRKMDKTTVLEKVIGFLQKHNEVSAQTEICDIQQDWKPSFLSNEEFTQLMLEALDGFVIVVTTDGSIIYVSDSITPLLGHLPADVMDQNLLNFLPEQEHSEVYKILSSHMLVTDSPSPEFLKSDNDLEFYCHLLRGSLNPKEFPTYEYIKFVGNFRSYNNVPSPSCNGFDNTLSRPCHVPLGKDVCFIATVRLATPQFLKEMCVADEPLEEFTSRHSLEWKFLFLDHRAPPIIGYLPFEVLGTSGYNYYHIDDLELLARCHQHLMQFGKGKSCCYRFLTKGQQWIWLQTHYYITYHQWNSKPEFIVCTHSVVSYADVRVERRQELALEDPPTEAMHPSAVKEKDSSLEPPQPFNALDMGASGLPSSPSPSASSRSSHKSSHTAMSEPTSTPTKLMAENSTTALPRPATLPQELPVQGLSQAATMPTALHSSASCDLTKQLLLQSLPQTGLQSPPAPVTQFSAQFSMFQTIKDQLEQRTRILQANIRWQQEELHKIQEQLCLVQDSNVQMFLQQPAVSLSFSSTQRPAAQQQLQQRPAAPSQPQLVVNTPLQGQITSTQVTNQHLLRESNVISAQGPKPMRSSQLLPASGRSLSSLPSQFSSTASVLPPGLSLTTIAPTPQDDSQCQPSPDFGHDRQLRLLLSQPIQPMMPGSCDARQPSEVSRTGRQVKYAQSQVMFPSPDSHPTNSSASTPVLLMGQAVLHPSFPASRPSPLQPAQAQQQPPPYLQAPTSLHSEQPDSLLLSTFSQQPGTLGYAATQSTPPQPPRPSRRVSRLSES</sequence>
<evidence type="ECO:0000250" key="1">
    <source>
        <dbReference type="UniProtKB" id="Q99743"/>
    </source>
</evidence>
<evidence type="ECO:0000255" key="2">
    <source>
        <dbReference type="PROSITE-ProRule" id="PRU00140"/>
    </source>
</evidence>
<evidence type="ECO:0000255" key="3">
    <source>
        <dbReference type="PROSITE-ProRule" id="PRU00981"/>
    </source>
</evidence>
<evidence type="ECO:0000256" key="4">
    <source>
        <dbReference type="SAM" id="MobiDB-lite"/>
    </source>
</evidence>
<evidence type="ECO:0000269" key="5">
    <source>
    </source>
</evidence>
<evidence type="ECO:0000269" key="6">
    <source>
    </source>
</evidence>
<evidence type="ECO:0000269" key="7">
    <source>
    </source>
</evidence>
<evidence type="ECO:0000269" key="8">
    <source>
    </source>
</evidence>
<evidence type="ECO:0000269" key="9">
    <source>
    </source>
</evidence>
<evidence type="ECO:0000269" key="10">
    <source>
    </source>
</evidence>
<evidence type="ECO:0000269" key="11">
    <source>
    </source>
</evidence>
<evidence type="ECO:0000269" key="12">
    <source>
    </source>
</evidence>
<evidence type="ECO:0000269" key="13">
    <source>
    </source>
</evidence>
<evidence type="ECO:0000269" key="14">
    <source>
    </source>
</evidence>
<evidence type="ECO:0000269" key="15">
    <source>
    </source>
</evidence>
<evidence type="ECO:0000269" key="16">
    <source>
    </source>
</evidence>
<evidence type="ECO:0000269" key="17">
    <source>
    </source>
</evidence>
<evidence type="ECO:0000269" key="18">
    <source>
    </source>
</evidence>
<evidence type="ECO:0000269" key="19">
    <source>
    </source>
</evidence>
<evidence type="ECO:0000269" key="20">
    <source>
    </source>
</evidence>
<evidence type="ECO:0000269" key="21">
    <source>
    </source>
</evidence>
<dbReference type="EMBL" id="U77969">
    <property type="protein sequence ID" value="AAB47249.1"/>
    <property type="molecule type" value="mRNA"/>
</dbReference>
<dbReference type="CCDS" id="CCDS48244.1"/>
<dbReference type="RefSeq" id="NP_032745.2">
    <property type="nucleotide sequence ID" value="NM_008719.2"/>
</dbReference>
<dbReference type="BMRB" id="P97460"/>
<dbReference type="SMR" id="P97460"/>
<dbReference type="FunCoup" id="P97460">
    <property type="interactions" value="803"/>
</dbReference>
<dbReference type="IntAct" id="P97460">
    <property type="interactions" value="1"/>
</dbReference>
<dbReference type="MINT" id="P97460"/>
<dbReference type="STRING" id="10090.ENSMUSP00000054719"/>
<dbReference type="GlyGen" id="P97460">
    <property type="glycosylation" value="1 site"/>
</dbReference>
<dbReference type="PhosphoSitePlus" id="P97460"/>
<dbReference type="PaxDb" id="10090-ENSMUSP00000054719"/>
<dbReference type="ProteomicsDB" id="293877"/>
<dbReference type="DNASU" id="18143"/>
<dbReference type="GeneID" id="18143"/>
<dbReference type="KEGG" id="mmu:18143"/>
<dbReference type="AGR" id="MGI:109232"/>
<dbReference type="CTD" id="4862"/>
<dbReference type="MGI" id="MGI:109232">
    <property type="gene designation" value="Npas2"/>
</dbReference>
<dbReference type="eggNOG" id="KOG3561">
    <property type="taxonomic scope" value="Eukaryota"/>
</dbReference>
<dbReference type="InParanoid" id="P97460"/>
<dbReference type="OrthoDB" id="411251at2759"/>
<dbReference type="PhylomeDB" id="P97460"/>
<dbReference type="BioGRID-ORCS" id="18143">
    <property type="hits" value="2 hits in 118 CRISPR screens"/>
</dbReference>
<dbReference type="ChiTaRS" id="Npas2">
    <property type="organism name" value="mouse"/>
</dbReference>
<dbReference type="PRO" id="PR:P97460"/>
<dbReference type="Proteomes" id="UP000000589">
    <property type="component" value="Unplaced"/>
</dbReference>
<dbReference type="RNAct" id="P97460">
    <property type="molecule type" value="protein"/>
</dbReference>
<dbReference type="GO" id="GO:0005829">
    <property type="term" value="C:cytosol"/>
    <property type="evidence" value="ECO:0000304"/>
    <property type="project" value="Reactome"/>
</dbReference>
<dbReference type="GO" id="GO:0005654">
    <property type="term" value="C:nucleoplasm"/>
    <property type="evidence" value="ECO:0000304"/>
    <property type="project" value="Reactome"/>
</dbReference>
<dbReference type="GO" id="GO:0005634">
    <property type="term" value="C:nucleus"/>
    <property type="evidence" value="ECO:0000250"/>
    <property type="project" value="UniProtKB"/>
</dbReference>
<dbReference type="GO" id="GO:0005667">
    <property type="term" value="C:transcription regulator complex"/>
    <property type="evidence" value="ECO:0000266"/>
    <property type="project" value="MGI"/>
</dbReference>
<dbReference type="GO" id="GO:0003677">
    <property type="term" value="F:DNA binding"/>
    <property type="evidence" value="ECO:0000314"/>
    <property type="project" value="UniProtKB"/>
</dbReference>
<dbReference type="GO" id="GO:0000981">
    <property type="term" value="F:DNA-binding transcription factor activity, RNA polymerase II-specific"/>
    <property type="evidence" value="ECO:0007669"/>
    <property type="project" value="InterPro"/>
</dbReference>
<dbReference type="GO" id="GO:0046872">
    <property type="term" value="F:metal ion binding"/>
    <property type="evidence" value="ECO:0007669"/>
    <property type="project" value="UniProtKB-KW"/>
</dbReference>
<dbReference type="GO" id="GO:0046983">
    <property type="term" value="F:protein dimerization activity"/>
    <property type="evidence" value="ECO:0007669"/>
    <property type="project" value="InterPro"/>
</dbReference>
<dbReference type="GO" id="GO:0000978">
    <property type="term" value="F:RNA polymerase II cis-regulatory region sequence-specific DNA binding"/>
    <property type="evidence" value="ECO:0000250"/>
    <property type="project" value="UniProtKB"/>
</dbReference>
<dbReference type="GO" id="GO:0032922">
    <property type="term" value="P:circadian regulation of gene expression"/>
    <property type="evidence" value="ECO:0000315"/>
    <property type="project" value="UniProtKB"/>
</dbReference>
<dbReference type="GO" id="GO:0007623">
    <property type="term" value="P:circadian rhythm"/>
    <property type="evidence" value="ECO:0000270"/>
    <property type="project" value="UniProtKB"/>
</dbReference>
<dbReference type="GO" id="GO:0042745">
    <property type="term" value="P:circadian sleep/wake cycle"/>
    <property type="evidence" value="ECO:0000315"/>
    <property type="project" value="MGI"/>
</dbReference>
<dbReference type="GO" id="GO:0006974">
    <property type="term" value="P:DNA damage response"/>
    <property type="evidence" value="ECO:0000250"/>
    <property type="project" value="UniProtKB"/>
</dbReference>
<dbReference type="GO" id="GO:0045475">
    <property type="term" value="P:locomotor rhythm"/>
    <property type="evidence" value="ECO:0000315"/>
    <property type="project" value="MGI"/>
</dbReference>
<dbReference type="GO" id="GO:2000987">
    <property type="term" value="P:positive regulation of behavioral fear response"/>
    <property type="evidence" value="ECO:0000315"/>
    <property type="project" value="UniProtKB"/>
</dbReference>
<dbReference type="GO" id="GO:0045739">
    <property type="term" value="P:positive regulation of DNA repair"/>
    <property type="evidence" value="ECO:0000250"/>
    <property type="project" value="UniProtKB"/>
</dbReference>
<dbReference type="GO" id="GO:0045893">
    <property type="term" value="P:positive regulation of DNA-templated transcription"/>
    <property type="evidence" value="ECO:0000314"/>
    <property type="project" value="UniProtKB"/>
</dbReference>
<dbReference type="GO" id="GO:0045944">
    <property type="term" value="P:positive regulation of transcription by RNA polymerase II"/>
    <property type="evidence" value="ECO:0000266"/>
    <property type="project" value="MGI"/>
</dbReference>
<dbReference type="GO" id="GO:0042752">
    <property type="term" value="P:regulation of circadian rhythm"/>
    <property type="evidence" value="ECO:0000315"/>
    <property type="project" value="UniProtKB"/>
</dbReference>
<dbReference type="GO" id="GO:0051775">
    <property type="term" value="P:response to redox state"/>
    <property type="evidence" value="ECO:0000314"/>
    <property type="project" value="UniProtKB"/>
</dbReference>
<dbReference type="GO" id="GO:0009410">
    <property type="term" value="P:response to xenobiotic stimulus"/>
    <property type="evidence" value="ECO:0000315"/>
    <property type="project" value="UniProtKB"/>
</dbReference>
<dbReference type="CDD" id="cd19737">
    <property type="entry name" value="bHLH-PAS_NPAS2_PASD4"/>
    <property type="match status" value="1"/>
</dbReference>
<dbReference type="CDD" id="cd00130">
    <property type="entry name" value="PAS"/>
    <property type="match status" value="2"/>
</dbReference>
<dbReference type="FunFam" id="3.30.450.20:FF:000016">
    <property type="entry name" value="Circadian locomoter output cycles protein"/>
    <property type="match status" value="1"/>
</dbReference>
<dbReference type="FunFam" id="4.10.280.10:FF:000013">
    <property type="entry name" value="Circadian locomoter output cycles protein kaput"/>
    <property type="match status" value="1"/>
</dbReference>
<dbReference type="FunFam" id="3.30.450.20:FF:000022">
    <property type="entry name" value="circadian locomoter output cycles protein kaput"/>
    <property type="match status" value="1"/>
</dbReference>
<dbReference type="Gene3D" id="4.10.280.10">
    <property type="entry name" value="Helix-loop-helix DNA-binding domain"/>
    <property type="match status" value="1"/>
</dbReference>
<dbReference type="Gene3D" id="3.30.450.20">
    <property type="entry name" value="PAS domain"/>
    <property type="match status" value="2"/>
</dbReference>
<dbReference type="InterPro" id="IPR011598">
    <property type="entry name" value="bHLH_dom"/>
</dbReference>
<dbReference type="InterPro" id="IPR047230">
    <property type="entry name" value="CLOCK-like"/>
</dbReference>
<dbReference type="InterPro" id="IPR036638">
    <property type="entry name" value="HLH_DNA-bd_sf"/>
</dbReference>
<dbReference type="InterPro" id="IPR001067">
    <property type="entry name" value="Nuc_translocat"/>
</dbReference>
<dbReference type="InterPro" id="IPR001610">
    <property type="entry name" value="PAC"/>
</dbReference>
<dbReference type="InterPro" id="IPR000014">
    <property type="entry name" value="PAS"/>
</dbReference>
<dbReference type="InterPro" id="IPR035965">
    <property type="entry name" value="PAS-like_dom_sf"/>
</dbReference>
<dbReference type="InterPro" id="IPR013767">
    <property type="entry name" value="PAS_fold"/>
</dbReference>
<dbReference type="NCBIfam" id="TIGR00229">
    <property type="entry name" value="sensory_box"/>
    <property type="match status" value="1"/>
</dbReference>
<dbReference type="PANTHER" id="PTHR46055">
    <property type="entry name" value="CIRCADIAN LOCOMOTER OUTPUT CYCLES PROTEIN KAPUT"/>
    <property type="match status" value="1"/>
</dbReference>
<dbReference type="PANTHER" id="PTHR46055:SF1">
    <property type="entry name" value="NEURONAL PAS DOMAIN-CONTAINING PROTEIN 2"/>
    <property type="match status" value="1"/>
</dbReference>
<dbReference type="Pfam" id="PF00010">
    <property type="entry name" value="HLH"/>
    <property type="match status" value="1"/>
</dbReference>
<dbReference type="Pfam" id="PF00989">
    <property type="entry name" value="PAS"/>
    <property type="match status" value="1"/>
</dbReference>
<dbReference type="Pfam" id="PF14598">
    <property type="entry name" value="PAS_11"/>
    <property type="match status" value="1"/>
</dbReference>
<dbReference type="PRINTS" id="PR00785">
    <property type="entry name" value="NCTRNSLOCATR"/>
</dbReference>
<dbReference type="SMART" id="SM00353">
    <property type="entry name" value="HLH"/>
    <property type="match status" value="1"/>
</dbReference>
<dbReference type="SMART" id="SM00086">
    <property type="entry name" value="PAC"/>
    <property type="match status" value="1"/>
</dbReference>
<dbReference type="SMART" id="SM00091">
    <property type="entry name" value="PAS"/>
    <property type="match status" value="2"/>
</dbReference>
<dbReference type="SUPFAM" id="SSF47459">
    <property type="entry name" value="HLH, helix-loop-helix DNA-binding domain"/>
    <property type="match status" value="1"/>
</dbReference>
<dbReference type="SUPFAM" id="SSF55785">
    <property type="entry name" value="PYP-like sensor domain (PAS domain)"/>
    <property type="match status" value="2"/>
</dbReference>
<dbReference type="PROSITE" id="PS50888">
    <property type="entry name" value="BHLH"/>
    <property type="match status" value="1"/>
</dbReference>
<dbReference type="PROSITE" id="PS50112">
    <property type="entry name" value="PAS"/>
    <property type="match status" value="1"/>
</dbReference>
<name>NPAS2_MOUSE</name>
<gene>
    <name type="primary">Npas2</name>
</gene>